<keyword id="KW-0002">3D-structure</keyword>
<keyword id="KW-0256">Endoplasmic reticulum</keyword>
<keyword id="KW-0407">Ion channel</keyword>
<keyword id="KW-0406">Ion transport</keyword>
<keyword id="KW-0472">Membrane</keyword>
<keyword id="KW-0630">Potassium</keyword>
<keyword id="KW-0631">Potassium channel</keyword>
<keyword id="KW-0633">Potassium transport</keyword>
<keyword id="KW-1185">Reference proteome</keyword>
<keyword id="KW-0812">Transmembrane</keyword>
<keyword id="KW-1133">Transmembrane helix</keyword>
<keyword id="KW-0813">Transport</keyword>
<sequence>MVVPESFQLDQEILLDAGAQLHRLKMYPYFDVAHYLLMIIEVRDDLGSAASIFSRKHPLSCWLSSMLMCFADAFLANFLLGEPVIAPFKRHDDIILATIIWYLVFYAPFDGIYKIAKITPVKCVLAVMKEVKRAYKVSHGVSHAAKLYPNSYIVQVLVGTAKGAGSGIVRTLEQLVRGVWLPTHNELLRPSFATKACVVAASVLALEKSGTYLTAPHDLVYLVIVGFFVYFKLSAVILHVTDPFAPIENLFCAIFMGGIWDAVSRALAASRDRRAAGAHSNENGSSISTPEKKDQ</sequence>
<gene>
    <name evidence="7" type="primary">tric-1B.1</name>
    <name evidence="7" type="ORF">Y57A10A.10</name>
</gene>
<comment type="function">
    <text evidence="1 3">Potassium channel that mediates transmembrane potassium transport (PubMed:27698420). Might be required for maintenance of rapid intracellular calcium release (By similarity). May act as a counter-ion channel that functions in synchronization with calcium release from intracellular stores (By similarity). Binds phosphatidylinositol 4,5-bisphosphate (PIP2) (PubMed:27698420).</text>
</comment>
<comment type="subunit">
    <text evidence="3">Homotrimer; trimerization probably requires binding to phosphatidylinositol 4,5-bisphosphate (PIP2).</text>
</comment>
<comment type="subcellular location">
    <subcellularLocation>
        <location evidence="1">Endoplasmic reticulum membrane</location>
        <topology evidence="1">Multi-pass membrane protein</topology>
    </subcellularLocation>
</comment>
<comment type="similarity">
    <text evidence="4">Belongs to the TMEM38 family.</text>
</comment>
<proteinExistence type="evidence at protein level"/>
<organism evidence="6">
    <name type="scientific">Caenorhabditis elegans</name>
    <dbReference type="NCBI Taxonomy" id="6239"/>
    <lineage>
        <taxon>Eukaryota</taxon>
        <taxon>Metazoa</taxon>
        <taxon>Ecdysozoa</taxon>
        <taxon>Nematoda</taxon>
        <taxon>Chromadorea</taxon>
        <taxon>Rhabditida</taxon>
        <taxon>Rhabditina</taxon>
        <taxon>Rhabditomorpha</taxon>
        <taxon>Rhabditoidea</taxon>
        <taxon>Rhabditidae</taxon>
        <taxon>Peloderinae</taxon>
        <taxon>Caenorhabditis</taxon>
    </lineage>
</organism>
<reference evidence="6" key="1">
    <citation type="journal article" date="1998" name="Science">
        <title>Genome sequence of the nematode C. elegans: a platform for investigating biology.</title>
        <authorList>
            <consortium name="The C. elegans sequencing consortium"/>
        </authorList>
    </citation>
    <scope>NUCLEOTIDE SEQUENCE [LARGE SCALE GENOMIC DNA]</scope>
    <source>
        <strain>Bristol N2</strain>
    </source>
</reference>
<reference evidence="8" key="2">
    <citation type="journal article" date="2016" name="Nature">
        <title>Pore architecture of TRIC channels and insights into their gating mechanism.</title>
        <authorList>
            <person name="Yang H."/>
            <person name="Hu M."/>
            <person name="Guo J."/>
            <person name="Ou X."/>
            <person name="Cai T."/>
            <person name="Liu Z."/>
        </authorList>
    </citation>
    <scope>X-RAY CRYSTALLOGRAPHY (3.3 ANGSTROMS) OF 1-251 IN COMPLEX WITH PIP2</scope>
    <scope>FUNCTION</scope>
    <scope>ACTIVITY REGULATION</scope>
    <scope>SUBUNIT</scope>
    <scope>TOPOLOGY</scope>
    <scope>MUTAGENESIS OF LYS-129; ARG-133 AND TRP-180</scope>
</reference>
<accession>Q9NA75</accession>
<name>T38B1_CAEEL</name>
<protein>
    <recommendedName>
        <fullName evidence="4">Trimeric intracellular cation channel type 1B.1</fullName>
        <shortName evidence="4">TRIC-1B.1</shortName>
    </recommendedName>
    <alternativeName>
        <fullName>TRIC-B1</fullName>
    </alternativeName>
</protein>
<feature type="chain" id="PRO_0000440241" description="Trimeric intracellular cation channel type 1B.1">
    <location>
        <begin position="1"/>
        <end position="295"/>
    </location>
</feature>
<feature type="topological domain" description="Lumenal" evidence="5">
    <location>
        <begin position="1"/>
        <end position="27"/>
    </location>
</feature>
<feature type="transmembrane region" description="Helical;Name=1" evidence="3">
    <location>
        <begin position="28"/>
        <end position="45"/>
    </location>
</feature>
<feature type="topological domain" description="Cytoplasmic" evidence="5">
    <location>
        <begin position="46"/>
        <end position="56"/>
    </location>
</feature>
<feature type="transmembrane region" description="Discontinuously helical;Name=2" evidence="3">
    <location>
        <begin position="57"/>
        <end position="80"/>
    </location>
</feature>
<feature type="topological domain" description="Lumenal" evidence="5">
    <location>
        <begin position="81"/>
        <end position="89"/>
    </location>
</feature>
<feature type="transmembrane region" description="Helical;Name=3" evidence="3">
    <location>
        <begin position="90"/>
        <end position="107"/>
    </location>
</feature>
<feature type="topological domain" description="Cytoplasmic" evidence="5">
    <location>
        <begin position="108"/>
        <end position="119"/>
    </location>
</feature>
<feature type="transmembrane region" description="Helical;Name=4" evidence="3">
    <location>
        <begin position="120"/>
        <end position="148"/>
    </location>
</feature>
<feature type="topological domain" description="Lumenal" evidence="5">
    <location>
        <begin position="149"/>
        <end position="150"/>
    </location>
</feature>
<feature type="transmembrane region" description="Discontinuously helical;Name=5" evidence="3">
    <location>
        <begin position="151"/>
        <end position="177"/>
    </location>
</feature>
<feature type="topological domain" description="Cytoplasmic" evidence="5">
    <location>
        <begin position="178"/>
        <end position="188"/>
    </location>
</feature>
<feature type="transmembrane region" description="Helical;Name=6" evidence="3">
    <location>
        <begin position="189"/>
        <end position="210"/>
    </location>
</feature>
<feature type="topological domain" description="Lumenal" evidence="5">
    <location>
        <begin position="211"/>
        <end position="215"/>
    </location>
</feature>
<feature type="transmembrane region" description="Helical;Name=7" evidence="3">
    <location>
        <begin position="216"/>
        <end position="239"/>
    </location>
</feature>
<feature type="topological domain" description="Cytoplasmic" evidence="5">
    <location>
        <begin position="240"/>
        <end position="295"/>
    </location>
</feature>
<feature type="region of interest" description="Disordered" evidence="2">
    <location>
        <begin position="274"/>
        <end position="295"/>
    </location>
</feature>
<feature type="binding site" evidence="3 8">
    <location>
        <position position="129"/>
    </location>
    <ligand>
        <name>a 1,2-diacyl-sn-glycero-3-phospho-(1D-myo-inositol-4,5-bisphosphate)</name>
        <dbReference type="ChEBI" id="CHEBI:58456"/>
    </ligand>
</feature>
<feature type="binding site" evidence="3 8">
    <location>
        <position position="133"/>
    </location>
    <ligand>
        <name>a 1,2-diacyl-sn-glycero-3-phospho-(1D-myo-inositol-4,5-bisphosphate)</name>
        <dbReference type="ChEBI" id="CHEBI:58456"/>
    </ligand>
</feature>
<feature type="binding site" evidence="8">
    <location>
        <position position="166"/>
    </location>
    <ligand>
        <name>a 1,2-diacyl-sn-glycero-3-phospho-(1D-myo-inositol-4,5-bisphosphate)</name>
        <dbReference type="ChEBI" id="CHEBI:58456"/>
    </ligand>
</feature>
<feature type="mutagenesis site" description="Abolishes PIP2 binding, impairs trimerization, reduces potassium current and calcium-sensitivity; when associated with L-133." evidence="3">
    <original>K</original>
    <variation>A</variation>
    <location>
        <position position="129"/>
    </location>
</feature>
<feature type="mutagenesis site" description="Abolishes PIP2 binding, impairs trimerization, reduces potassium current and calcium-sensitivity; when associated with A-129." evidence="3">
    <original>R</original>
    <variation>L</variation>
    <location>
        <position position="133"/>
    </location>
</feature>
<feature type="mutagenesis site" description="Abolishes calcium-sensitivity." evidence="3">
    <original>W</original>
    <variation>A</variation>
    <location>
        <position position="180"/>
    </location>
</feature>
<feature type="helix" evidence="9">
    <location>
        <begin position="9"/>
        <end position="23"/>
    </location>
</feature>
<feature type="helix" evidence="9">
    <location>
        <begin position="29"/>
        <end position="44"/>
    </location>
</feature>
<feature type="helix" evidence="9">
    <location>
        <begin position="47"/>
        <end position="49"/>
    </location>
</feature>
<feature type="helix" evidence="9">
    <location>
        <begin position="50"/>
        <end position="56"/>
    </location>
</feature>
<feature type="helix" evidence="9">
    <location>
        <begin position="58"/>
        <end position="69"/>
    </location>
</feature>
<feature type="helix" evidence="9">
    <location>
        <begin position="71"/>
        <end position="79"/>
    </location>
</feature>
<feature type="helix" evidence="9">
    <location>
        <begin position="86"/>
        <end position="88"/>
    </location>
</feature>
<feature type="helix" evidence="9">
    <location>
        <begin position="91"/>
        <end position="106"/>
    </location>
</feature>
<feature type="helix" evidence="9">
    <location>
        <begin position="108"/>
        <end position="110"/>
    </location>
</feature>
<feature type="helix" evidence="9">
    <location>
        <begin position="111"/>
        <end position="117"/>
    </location>
</feature>
<feature type="helix" evidence="9">
    <location>
        <begin position="121"/>
        <end position="147"/>
    </location>
</feature>
<feature type="helix" evidence="9">
    <location>
        <begin position="152"/>
        <end position="164"/>
    </location>
</feature>
<feature type="helix" evidence="9">
    <location>
        <begin position="166"/>
        <end position="176"/>
    </location>
</feature>
<feature type="strand" evidence="9">
    <location>
        <begin position="186"/>
        <end position="188"/>
    </location>
</feature>
<feature type="helix" evidence="9">
    <location>
        <begin position="190"/>
        <end position="209"/>
    </location>
</feature>
<feature type="helix" evidence="9">
    <location>
        <begin position="217"/>
        <end position="238"/>
    </location>
</feature>
<evidence type="ECO:0000250" key="1">
    <source>
        <dbReference type="UniProtKB" id="Q9DAV9"/>
    </source>
</evidence>
<evidence type="ECO:0000256" key="2">
    <source>
        <dbReference type="SAM" id="MobiDB-lite"/>
    </source>
</evidence>
<evidence type="ECO:0000269" key="3">
    <source>
    </source>
</evidence>
<evidence type="ECO:0000305" key="4"/>
<evidence type="ECO:0000305" key="5">
    <source>
    </source>
</evidence>
<evidence type="ECO:0000312" key="6">
    <source>
        <dbReference type="Proteomes" id="UP000001940"/>
    </source>
</evidence>
<evidence type="ECO:0000312" key="7">
    <source>
        <dbReference type="WormBase" id="Y57A10A.10"/>
    </source>
</evidence>
<evidence type="ECO:0007744" key="8">
    <source>
        <dbReference type="PDB" id="5EGI"/>
    </source>
</evidence>
<evidence type="ECO:0007829" key="9">
    <source>
        <dbReference type="PDB" id="5EGI"/>
    </source>
</evidence>
<dbReference type="EMBL" id="BX284602">
    <property type="protein sequence ID" value="CAB55030.2"/>
    <property type="molecule type" value="Genomic_DNA"/>
</dbReference>
<dbReference type="RefSeq" id="NP_496603.2">
    <property type="nucleotide sequence ID" value="NM_064202.4"/>
</dbReference>
<dbReference type="PDB" id="5EGI">
    <property type="method" value="X-ray"/>
    <property type="resolution" value="3.30 A"/>
    <property type="chains" value="A/B/C=1-251"/>
</dbReference>
<dbReference type="PDBsum" id="5EGI"/>
<dbReference type="SMR" id="Q9NA75"/>
<dbReference type="FunCoup" id="Q9NA75">
    <property type="interactions" value="1343"/>
</dbReference>
<dbReference type="STRING" id="6239.Y57A10A.10.1"/>
<dbReference type="PaxDb" id="6239-Y57A10A.10"/>
<dbReference type="PeptideAtlas" id="Q9NA75"/>
<dbReference type="EnsemblMetazoa" id="Y57A10A.10.1">
    <property type="protein sequence ID" value="Y57A10A.10.1"/>
    <property type="gene ID" value="WBGene00013255"/>
</dbReference>
<dbReference type="GeneID" id="174867"/>
<dbReference type="KEGG" id="cel:CELE_Y57A10A.10"/>
<dbReference type="UCSC" id="Y57A10A.10">
    <property type="organism name" value="c. elegans"/>
</dbReference>
<dbReference type="AGR" id="WB:WBGene00013255"/>
<dbReference type="CTD" id="174867"/>
<dbReference type="WormBase" id="Y57A10A.10">
    <property type="protein sequence ID" value="CE44590"/>
    <property type="gene ID" value="WBGene00013255"/>
    <property type="gene designation" value="tric-1B.1"/>
</dbReference>
<dbReference type="eggNOG" id="KOG3944">
    <property type="taxonomic scope" value="Eukaryota"/>
</dbReference>
<dbReference type="GeneTree" id="ENSGT00390000018845"/>
<dbReference type="HOGENOM" id="CLU_076376_0_0_1"/>
<dbReference type="InParanoid" id="Q9NA75"/>
<dbReference type="OMA" id="HNELLRP"/>
<dbReference type="OrthoDB" id="195817at2759"/>
<dbReference type="PhylomeDB" id="Q9NA75"/>
<dbReference type="PRO" id="PR:Q9NA75"/>
<dbReference type="Proteomes" id="UP000001940">
    <property type="component" value="Chromosome II"/>
</dbReference>
<dbReference type="Bgee" id="WBGene00013255">
    <property type="expression patterns" value="Expressed in larva and 3 other cell types or tissues"/>
</dbReference>
<dbReference type="GO" id="GO:0005789">
    <property type="term" value="C:endoplasmic reticulum membrane"/>
    <property type="evidence" value="ECO:0007669"/>
    <property type="project" value="UniProtKB-SubCell"/>
</dbReference>
<dbReference type="GO" id="GO:0042802">
    <property type="term" value="F:identical protein binding"/>
    <property type="evidence" value="ECO:0007669"/>
    <property type="project" value="InterPro"/>
</dbReference>
<dbReference type="GO" id="GO:0005267">
    <property type="term" value="F:potassium channel activity"/>
    <property type="evidence" value="ECO:0007669"/>
    <property type="project" value="UniProtKB-KW"/>
</dbReference>
<dbReference type="InterPro" id="IPR007866">
    <property type="entry name" value="TRIC_channel"/>
</dbReference>
<dbReference type="PANTHER" id="PTHR12454:SF11">
    <property type="entry name" value="GH25683P"/>
    <property type="match status" value="1"/>
</dbReference>
<dbReference type="PANTHER" id="PTHR12454">
    <property type="entry name" value="TRIMERIC INTRACELLULAR CATION CHANNEL"/>
    <property type="match status" value="1"/>
</dbReference>
<dbReference type="Pfam" id="PF05197">
    <property type="entry name" value="TRIC"/>
    <property type="match status" value="1"/>
</dbReference>